<keyword id="KW-0025">Alternative splicing</keyword>
<keyword id="KW-0238">DNA-binding</keyword>
<keyword id="KW-0479">Metal-binding</keyword>
<keyword id="KW-0539">Nucleus</keyword>
<keyword id="KW-1267">Proteomics identification</keyword>
<keyword id="KW-1185">Reference proteome</keyword>
<keyword id="KW-0677">Repeat</keyword>
<keyword id="KW-0804">Transcription</keyword>
<keyword id="KW-0805">Transcription regulation</keyword>
<keyword id="KW-0862">Zinc</keyword>
<keyword id="KW-0863">Zinc-finger</keyword>
<name>ZN182_HUMAN</name>
<sequence length="639" mass="73646">MTPASASGEDSGSFYSWQKAKREQGLVTFEDVAVDFTQEEWQYLNPPQRTLYRDVMLETYSNLVFVGQQVTKPNLILKLEVEECPAEGKIPFWNFPEVCQVDEQIERQHQDDQDKCLLMQVGFSDKKTIITKSARDCHEFGNILHLSTNLVASIQRPDKHESFGNNMVDNLDLFSRSSAENKYDNGCAKLFFHTEYEKTNPGMKPYGYKECGKGLRRKKGLSLHQRIKNGEKPFECTACRKTFSKKSHLIVHWRTHTGEKPFGCTECGKAFSQKSQLIIHLRTHTGERPFECPECGKAFREKSTVIIHYRTHTGEKPYECNECGKAFTQKSNLIVHQKTHTGEKTYECTKCGESFIQKLDLIIHHSTHTGKKPHECNECKKTFSDKSTLIIHQRTHTGEKPHKCTECGKSFNEKSTLIVHQRTHTGEKPYECDVCGKTFTQKSNLGVHQRTHSGEKPFECNECEKAFSQKSYLMLHQRGHTGEKPYECNECEKAFSQKSYLIIHQRTHTEEKPYKCNECGKAFREKSKLIIHQRIHTGEKPYECPVCWKAFSQKSQLIIHQRTHTGEKPYACTECGKAFREKSTFTVHQRTHTGEKPYKCTECGKAFTQKSNLIVHQRTHAGKKAHGRGHTRKSKFMAH</sequence>
<accession>P17025</accession>
<accession>A2IDD7</accession>
<accession>Q3KP67</accession>
<accession>Q96QH7</accession>
<evidence type="ECO:0000255" key="1">
    <source>
        <dbReference type="PROSITE-ProRule" id="PRU00042"/>
    </source>
</evidence>
<evidence type="ECO:0000255" key="2">
    <source>
        <dbReference type="PROSITE-ProRule" id="PRU00119"/>
    </source>
</evidence>
<evidence type="ECO:0000256" key="3">
    <source>
        <dbReference type="SAM" id="MobiDB-lite"/>
    </source>
</evidence>
<evidence type="ECO:0000269" key="4">
    <source>
    </source>
</evidence>
<evidence type="ECO:0000303" key="5">
    <source>
    </source>
</evidence>
<evidence type="ECO:0000305" key="6"/>
<proteinExistence type="evidence at protein level"/>
<protein>
    <recommendedName>
        <fullName>Zinc finger protein 182</fullName>
    </recommendedName>
    <alternativeName>
        <fullName>Zinc finger protein 21</fullName>
    </alternativeName>
    <alternativeName>
        <fullName>Zinc finger protein KOX14</fullName>
    </alternativeName>
</protein>
<comment type="function">
    <text>May be involved in transcriptional regulation.</text>
</comment>
<comment type="subcellular location">
    <subcellularLocation>
        <location evidence="6">Nucleus</location>
    </subcellularLocation>
</comment>
<comment type="alternative products">
    <event type="alternative splicing"/>
    <isoform>
        <id>P17025-1</id>
        <name>1</name>
        <sequence type="displayed"/>
    </isoform>
    <isoform>
        <id>P17025-2</id>
        <name>2</name>
        <sequence type="described" ref="VSP_043078"/>
    </isoform>
</comment>
<comment type="similarity">
    <text evidence="6">Belongs to the krueppel C2H2-type zinc-finger protein family.</text>
</comment>
<organism>
    <name type="scientific">Homo sapiens</name>
    <name type="common">Human</name>
    <dbReference type="NCBI Taxonomy" id="9606"/>
    <lineage>
        <taxon>Eukaryota</taxon>
        <taxon>Metazoa</taxon>
        <taxon>Chordata</taxon>
        <taxon>Craniata</taxon>
        <taxon>Vertebrata</taxon>
        <taxon>Euteleostomi</taxon>
        <taxon>Mammalia</taxon>
        <taxon>Eutheria</taxon>
        <taxon>Euarchontoglires</taxon>
        <taxon>Primates</taxon>
        <taxon>Haplorrhini</taxon>
        <taxon>Catarrhini</taxon>
        <taxon>Hominidae</taxon>
        <taxon>Homo</taxon>
    </lineage>
</organism>
<dbReference type="EMBL" id="AK122874">
    <property type="protein sequence ID" value="BAG53772.1"/>
    <property type="molecule type" value="mRNA"/>
</dbReference>
<dbReference type="EMBL" id="Z98304">
    <property type="status" value="NOT_ANNOTATED_CDS"/>
    <property type="molecule type" value="Genomic_DNA"/>
</dbReference>
<dbReference type="EMBL" id="CH471164">
    <property type="protein sequence ID" value="EAW59334.1"/>
    <property type="molecule type" value="Genomic_DNA"/>
</dbReference>
<dbReference type="EMBL" id="CH471164">
    <property type="protein sequence ID" value="EAW59335.1"/>
    <property type="molecule type" value="Genomic_DNA"/>
</dbReference>
<dbReference type="EMBL" id="BC106875">
    <property type="protein sequence ID" value="AAI06876.1"/>
    <property type="molecule type" value="mRNA"/>
</dbReference>
<dbReference type="EMBL" id="BC114216">
    <property type="protein sequence ID" value="AAI14217.1"/>
    <property type="molecule type" value="mRNA"/>
</dbReference>
<dbReference type="EMBL" id="X52345">
    <property type="protein sequence ID" value="CAA36571.1"/>
    <property type="molecule type" value="mRNA"/>
</dbReference>
<dbReference type="CCDS" id="CCDS35235.1">
    <molecule id="P17025-2"/>
</dbReference>
<dbReference type="CCDS" id="CCDS35236.1">
    <molecule id="P17025-1"/>
</dbReference>
<dbReference type="PIR" id="I37953">
    <property type="entry name" value="S10402"/>
</dbReference>
<dbReference type="RefSeq" id="NP_001007089.1">
    <molecule id="P17025-2"/>
    <property type="nucleotide sequence ID" value="NM_001007088.2"/>
</dbReference>
<dbReference type="RefSeq" id="NP_001171570.1">
    <molecule id="P17025-1"/>
    <property type="nucleotide sequence ID" value="NM_001178099.2"/>
</dbReference>
<dbReference type="RefSeq" id="NP_008893.1">
    <molecule id="P17025-1"/>
    <property type="nucleotide sequence ID" value="NM_006962.2"/>
</dbReference>
<dbReference type="SMR" id="P17025"/>
<dbReference type="BioGRID" id="113400">
    <property type="interactions" value="5"/>
</dbReference>
<dbReference type="FunCoup" id="P17025">
    <property type="interactions" value="71"/>
</dbReference>
<dbReference type="IntAct" id="P17025">
    <property type="interactions" value="2"/>
</dbReference>
<dbReference type="STRING" id="9606.ENSP00000380165"/>
<dbReference type="GlyGen" id="P17025">
    <property type="glycosylation" value="1 site, 1 O-linked glycan (1 site)"/>
</dbReference>
<dbReference type="iPTMnet" id="P17025"/>
<dbReference type="PhosphoSitePlus" id="P17025"/>
<dbReference type="BioMuta" id="ZNF182"/>
<dbReference type="DMDM" id="85681865"/>
<dbReference type="jPOST" id="P17025"/>
<dbReference type="MassIVE" id="P17025"/>
<dbReference type="PaxDb" id="9606-ENSP00000380165"/>
<dbReference type="PeptideAtlas" id="P17025"/>
<dbReference type="ProteomicsDB" id="53425">
    <molecule id="P17025-1"/>
</dbReference>
<dbReference type="ProteomicsDB" id="53426">
    <molecule id="P17025-2"/>
</dbReference>
<dbReference type="Antibodypedia" id="21607">
    <property type="antibodies" value="109 antibodies from 19 providers"/>
</dbReference>
<dbReference type="DNASU" id="7569"/>
<dbReference type="Ensembl" id="ENST00000376943.8">
    <molecule id="P17025-2"/>
    <property type="protein sequence ID" value="ENSP00000366142.4"/>
    <property type="gene ID" value="ENSG00000147118.12"/>
</dbReference>
<dbReference type="Ensembl" id="ENST00000396965.5">
    <molecule id="P17025-1"/>
    <property type="protein sequence ID" value="ENSP00000380165.1"/>
    <property type="gene ID" value="ENSG00000147118.12"/>
</dbReference>
<dbReference type="GeneID" id="7569"/>
<dbReference type="KEGG" id="hsa:7569"/>
<dbReference type="MANE-Select" id="ENST00000376943.8">
    <molecule id="P17025-2"/>
    <property type="protein sequence ID" value="ENSP00000366142.4"/>
    <property type="RefSeq nucleotide sequence ID" value="NM_001007088.2"/>
    <property type="RefSeq protein sequence ID" value="NP_001007089.1"/>
</dbReference>
<dbReference type="UCSC" id="uc004dis.4">
    <molecule id="P17025-1"/>
    <property type="organism name" value="human"/>
</dbReference>
<dbReference type="AGR" id="HGNC:13001"/>
<dbReference type="CTD" id="7569"/>
<dbReference type="DisGeNET" id="7569"/>
<dbReference type="GeneCards" id="ZNF182"/>
<dbReference type="HGNC" id="HGNC:13001">
    <property type="gene designation" value="ZNF182"/>
</dbReference>
<dbReference type="HPA" id="ENSG00000147118">
    <property type="expression patterns" value="Low tissue specificity"/>
</dbReference>
<dbReference type="MIM" id="314993">
    <property type="type" value="gene"/>
</dbReference>
<dbReference type="neXtProt" id="NX_P17025"/>
<dbReference type="OpenTargets" id="ENSG00000147118"/>
<dbReference type="PharmGKB" id="PA37581"/>
<dbReference type="VEuPathDB" id="HostDB:ENSG00000147118"/>
<dbReference type="eggNOG" id="KOG1721">
    <property type="taxonomic scope" value="Eukaryota"/>
</dbReference>
<dbReference type="GeneTree" id="ENSGT00940000162614"/>
<dbReference type="HOGENOM" id="CLU_002678_0_12_1"/>
<dbReference type="InParanoid" id="P17025"/>
<dbReference type="OMA" id="PGVKPHG"/>
<dbReference type="OrthoDB" id="9411774at2759"/>
<dbReference type="PAN-GO" id="P17025">
    <property type="GO annotations" value="4 GO annotations based on evolutionary models"/>
</dbReference>
<dbReference type="PhylomeDB" id="P17025"/>
<dbReference type="TreeFam" id="TF350805"/>
<dbReference type="PathwayCommons" id="P17025"/>
<dbReference type="SignaLink" id="P17025"/>
<dbReference type="BioGRID-ORCS" id="7569">
    <property type="hits" value="14 hits in 796 CRISPR screens"/>
</dbReference>
<dbReference type="GeneWiki" id="ZNF182"/>
<dbReference type="GenomeRNAi" id="7569"/>
<dbReference type="Pharos" id="P17025">
    <property type="development level" value="Tbio"/>
</dbReference>
<dbReference type="PRO" id="PR:P17025"/>
<dbReference type="Proteomes" id="UP000005640">
    <property type="component" value="Chromosome X"/>
</dbReference>
<dbReference type="RNAct" id="P17025">
    <property type="molecule type" value="protein"/>
</dbReference>
<dbReference type="Bgee" id="ENSG00000147118">
    <property type="expression patterns" value="Expressed in secondary oocyte and 187 other cell types or tissues"/>
</dbReference>
<dbReference type="GO" id="GO:0005634">
    <property type="term" value="C:nucleus"/>
    <property type="evidence" value="ECO:0000318"/>
    <property type="project" value="GO_Central"/>
</dbReference>
<dbReference type="GO" id="GO:0000981">
    <property type="term" value="F:DNA-binding transcription factor activity, RNA polymerase II-specific"/>
    <property type="evidence" value="ECO:0000318"/>
    <property type="project" value="GO_Central"/>
</dbReference>
<dbReference type="GO" id="GO:0000978">
    <property type="term" value="F:RNA polymerase II cis-regulatory region sequence-specific DNA binding"/>
    <property type="evidence" value="ECO:0000318"/>
    <property type="project" value="GO_Central"/>
</dbReference>
<dbReference type="GO" id="GO:0008270">
    <property type="term" value="F:zinc ion binding"/>
    <property type="evidence" value="ECO:0007669"/>
    <property type="project" value="UniProtKB-KW"/>
</dbReference>
<dbReference type="GO" id="GO:0006357">
    <property type="term" value="P:regulation of transcription by RNA polymerase II"/>
    <property type="evidence" value="ECO:0000318"/>
    <property type="project" value="GO_Central"/>
</dbReference>
<dbReference type="CDD" id="cd07765">
    <property type="entry name" value="KRAB_A-box"/>
    <property type="match status" value="1"/>
</dbReference>
<dbReference type="FunFam" id="3.30.160.60:FF:000029">
    <property type="entry name" value="GLI family zinc finger 4"/>
    <property type="match status" value="2"/>
</dbReference>
<dbReference type="FunFam" id="3.30.160.60:FF:001073">
    <property type="entry name" value="zinc finger protein 182"/>
    <property type="match status" value="1"/>
</dbReference>
<dbReference type="FunFam" id="3.30.160.60:FF:000053">
    <property type="entry name" value="zinc finger protein 182 isoform X1"/>
    <property type="match status" value="1"/>
</dbReference>
<dbReference type="FunFam" id="3.30.160.60:FF:000824">
    <property type="entry name" value="Zinc finger protein 184"/>
    <property type="match status" value="2"/>
</dbReference>
<dbReference type="FunFam" id="3.30.160.60:FF:000295">
    <property type="entry name" value="zinc finger protein 19"/>
    <property type="match status" value="1"/>
</dbReference>
<dbReference type="FunFam" id="3.30.160.60:FF:000622">
    <property type="entry name" value="zinc finger protein 26 isoform X3"/>
    <property type="match status" value="1"/>
</dbReference>
<dbReference type="FunFam" id="3.30.160.60:FF:000128">
    <property type="entry name" value="zinc finger protein 268 isoform X1"/>
    <property type="match status" value="1"/>
</dbReference>
<dbReference type="FunFam" id="3.30.160.60:FF:002343">
    <property type="entry name" value="Zinc finger protein 33A"/>
    <property type="match status" value="3"/>
</dbReference>
<dbReference type="FunFam" id="3.30.160.60:FF:001498">
    <property type="entry name" value="Zinc finger protein 404"/>
    <property type="match status" value="1"/>
</dbReference>
<dbReference type="FunFam" id="3.30.160.60:FF:000953">
    <property type="entry name" value="Zinc finger protein 691"/>
    <property type="match status" value="1"/>
</dbReference>
<dbReference type="Gene3D" id="6.10.140.140">
    <property type="match status" value="1"/>
</dbReference>
<dbReference type="Gene3D" id="3.30.160.60">
    <property type="entry name" value="Classic Zinc Finger"/>
    <property type="match status" value="15"/>
</dbReference>
<dbReference type="InterPro" id="IPR050717">
    <property type="entry name" value="C2H2-ZF_Transcription_Reg"/>
</dbReference>
<dbReference type="InterPro" id="IPR001909">
    <property type="entry name" value="KRAB"/>
</dbReference>
<dbReference type="InterPro" id="IPR036051">
    <property type="entry name" value="KRAB_dom_sf"/>
</dbReference>
<dbReference type="InterPro" id="IPR036236">
    <property type="entry name" value="Znf_C2H2_sf"/>
</dbReference>
<dbReference type="InterPro" id="IPR013087">
    <property type="entry name" value="Znf_C2H2_type"/>
</dbReference>
<dbReference type="PANTHER" id="PTHR14196">
    <property type="entry name" value="ODD-SKIPPED - RELATED"/>
    <property type="match status" value="1"/>
</dbReference>
<dbReference type="PANTHER" id="PTHR14196:SF12">
    <property type="entry name" value="ZINC FINGER PROTEIN 208-LIKE"/>
    <property type="match status" value="1"/>
</dbReference>
<dbReference type="Pfam" id="PF01352">
    <property type="entry name" value="KRAB"/>
    <property type="match status" value="1"/>
</dbReference>
<dbReference type="Pfam" id="PF00096">
    <property type="entry name" value="zf-C2H2"/>
    <property type="match status" value="14"/>
</dbReference>
<dbReference type="SMART" id="SM00349">
    <property type="entry name" value="KRAB"/>
    <property type="match status" value="1"/>
</dbReference>
<dbReference type="SMART" id="SM00355">
    <property type="entry name" value="ZnF_C2H2"/>
    <property type="match status" value="14"/>
</dbReference>
<dbReference type="SUPFAM" id="SSF57667">
    <property type="entry name" value="beta-beta-alpha zinc fingers"/>
    <property type="match status" value="8"/>
</dbReference>
<dbReference type="SUPFAM" id="SSF109640">
    <property type="entry name" value="KRAB domain (Kruppel-associated box)"/>
    <property type="match status" value="1"/>
</dbReference>
<dbReference type="PROSITE" id="PS50805">
    <property type="entry name" value="KRAB"/>
    <property type="match status" value="1"/>
</dbReference>
<dbReference type="PROSITE" id="PS00028">
    <property type="entry name" value="ZINC_FINGER_C2H2_1"/>
    <property type="match status" value="14"/>
</dbReference>
<dbReference type="PROSITE" id="PS50157">
    <property type="entry name" value="ZINC_FINGER_C2H2_2"/>
    <property type="match status" value="15"/>
</dbReference>
<gene>
    <name type="primary">ZNF182</name>
    <name type="synonym">KOX14</name>
    <name type="synonym">ZNF21</name>
</gene>
<reference key="1">
    <citation type="journal article" date="2004" name="Nat. Genet.">
        <title>Complete sequencing and characterization of 21,243 full-length human cDNAs.</title>
        <authorList>
            <person name="Ota T."/>
            <person name="Suzuki Y."/>
            <person name="Nishikawa T."/>
            <person name="Otsuki T."/>
            <person name="Sugiyama T."/>
            <person name="Irie R."/>
            <person name="Wakamatsu A."/>
            <person name="Hayashi K."/>
            <person name="Sato H."/>
            <person name="Nagai K."/>
            <person name="Kimura K."/>
            <person name="Makita H."/>
            <person name="Sekine M."/>
            <person name="Obayashi M."/>
            <person name="Nishi T."/>
            <person name="Shibahara T."/>
            <person name="Tanaka T."/>
            <person name="Ishii S."/>
            <person name="Yamamoto J."/>
            <person name="Saito K."/>
            <person name="Kawai Y."/>
            <person name="Isono Y."/>
            <person name="Nakamura Y."/>
            <person name="Nagahari K."/>
            <person name="Murakami K."/>
            <person name="Yasuda T."/>
            <person name="Iwayanagi T."/>
            <person name="Wagatsuma M."/>
            <person name="Shiratori A."/>
            <person name="Sudo H."/>
            <person name="Hosoiri T."/>
            <person name="Kaku Y."/>
            <person name="Kodaira H."/>
            <person name="Kondo H."/>
            <person name="Sugawara M."/>
            <person name="Takahashi M."/>
            <person name="Kanda K."/>
            <person name="Yokoi T."/>
            <person name="Furuya T."/>
            <person name="Kikkawa E."/>
            <person name="Omura Y."/>
            <person name="Abe K."/>
            <person name="Kamihara K."/>
            <person name="Katsuta N."/>
            <person name="Sato K."/>
            <person name="Tanikawa M."/>
            <person name="Yamazaki M."/>
            <person name="Ninomiya K."/>
            <person name="Ishibashi T."/>
            <person name="Yamashita H."/>
            <person name="Murakawa K."/>
            <person name="Fujimori K."/>
            <person name="Tanai H."/>
            <person name="Kimata M."/>
            <person name="Watanabe M."/>
            <person name="Hiraoka S."/>
            <person name="Chiba Y."/>
            <person name="Ishida S."/>
            <person name="Ono Y."/>
            <person name="Takiguchi S."/>
            <person name="Watanabe S."/>
            <person name="Yosida M."/>
            <person name="Hotuta T."/>
            <person name="Kusano J."/>
            <person name="Kanehori K."/>
            <person name="Takahashi-Fujii A."/>
            <person name="Hara H."/>
            <person name="Tanase T.-O."/>
            <person name="Nomura Y."/>
            <person name="Togiya S."/>
            <person name="Komai F."/>
            <person name="Hara R."/>
            <person name="Takeuchi K."/>
            <person name="Arita M."/>
            <person name="Imose N."/>
            <person name="Musashino K."/>
            <person name="Yuuki H."/>
            <person name="Oshima A."/>
            <person name="Sasaki N."/>
            <person name="Aotsuka S."/>
            <person name="Yoshikawa Y."/>
            <person name="Matsunawa H."/>
            <person name="Ichihara T."/>
            <person name="Shiohata N."/>
            <person name="Sano S."/>
            <person name="Moriya S."/>
            <person name="Momiyama H."/>
            <person name="Satoh N."/>
            <person name="Takami S."/>
            <person name="Terashima Y."/>
            <person name="Suzuki O."/>
            <person name="Nakagawa S."/>
            <person name="Senoh A."/>
            <person name="Mizoguchi H."/>
            <person name="Goto Y."/>
            <person name="Shimizu F."/>
            <person name="Wakebe H."/>
            <person name="Hishigaki H."/>
            <person name="Watanabe T."/>
            <person name="Sugiyama A."/>
            <person name="Takemoto M."/>
            <person name="Kawakami B."/>
            <person name="Yamazaki M."/>
            <person name="Watanabe K."/>
            <person name="Kumagai A."/>
            <person name="Itakura S."/>
            <person name="Fukuzumi Y."/>
            <person name="Fujimori Y."/>
            <person name="Komiyama M."/>
            <person name="Tashiro H."/>
            <person name="Tanigami A."/>
            <person name="Fujiwara T."/>
            <person name="Ono T."/>
            <person name="Yamada K."/>
            <person name="Fujii Y."/>
            <person name="Ozaki K."/>
            <person name="Hirao M."/>
            <person name="Ohmori Y."/>
            <person name="Kawabata A."/>
            <person name="Hikiji T."/>
            <person name="Kobatake N."/>
            <person name="Inagaki H."/>
            <person name="Ikema Y."/>
            <person name="Okamoto S."/>
            <person name="Okitani R."/>
            <person name="Kawakami T."/>
            <person name="Noguchi S."/>
            <person name="Itoh T."/>
            <person name="Shigeta K."/>
            <person name="Senba T."/>
            <person name="Matsumura K."/>
            <person name="Nakajima Y."/>
            <person name="Mizuno T."/>
            <person name="Morinaga M."/>
            <person name="Sasaki M."/>
            <person name="Togashi T."/>
            <person name="Oyama M."/>
            <person name="Hata H."/>
            <person name="Watanabe M."/>
            <person name="Komatsu T."/>
            <person name="Mizushima-Sugano J."/>
            <person name="Satoh T."/>
            <person name="Shirai Y."/>
            <person name="Takahashi Y."/>
            <person name="Nakagawa K."/>
            <person name="Okumura K."/>
            <person name="Nagase T."/>
            <person name="Nomura N."/>
            <person name="Kikuchi H."/>
            <person name="Masuho Y."/>
            <person name="Yamashita R."/>
            <person name="Nakai K."/>
            <person name="Yada T."/>
            <person name="Nakamura Y."/>
            <person name="Ohara O."/>
            <person name="Isogai T."/>
            <person name="Sugano S."/>
        </authorList>
    </citation>
    <scope>NUCLEOTIDE SEQUENCE [LARGE SCALE MRNA] (ISOFORM 1)</scope>
</reference>
<reference key="2">
    <citation type="journal article" date="2005" name="Nature">
        <title>The DNA sequence of the human X chromosome.</title>
        <authorList>
            <person name="Ross M.T."/>
            <person name="Grafham D.V."/>
            <person name="Coffey A.J."/>
            <person name="Scherer S."/>
            <person name="McLay K."/>
            <person name="Muzny D."/>
            <person name="Platzer M."/>
            <person name="Howell G.R."/>
            <person name="Burrows C."/>
            <person name="Bird C.P."/>
            <person name="Frankish A."/>
            <person name="Lovell F.L."/>
            <person name="Howe K.L."/>
            <person name="Ashurst J.L."/>
            <person name="Fulton R.S."/>
            <person name="Sudbrak R."/>
            <person name="Wen G."/>
            <person name="Jones M.C."/>
            <person name="Hurles M.E."/>
            <person name="Andrews T.D."/>
            <person name="Scott C.E."/>
            <person name="Searle S."/>
            <person name="Ramser J."/>
            <person name="Whittaker A."/>
            <person name="Deadman R."/>
            <person name="Carter N.P."/>
            <person name="Hunt S.E."/>
            <person name="Chen R."/>
            <person name="Cree A."/>
            <person name="Gunaratne P."/>
            <person name="Havlak P."/>
            <person name="Hodgson A."/>
            <person name="Metzker M.L."/>
            <person name="Richards S."/>
            <person name="Scott G."/>
            <person name="Steffen D."/>
            <person name="Sodergren E."/>
            <person name="Wheeler D.A."/>
            <person name="Worley K.C."/>
            <person name="Ainscough R."/>
            <person name="Ambrose K.D."/>
            <person name="Ansari-Lari M.A."/>
            <person name="Aradhya S."/>
            <person name="Ashwell R.I."/>
            <person name="Babbage A.K."/>
            <person name="Bagguley C.L."/>
            <person name="Ballabio A."/>
            <person name="Banerjee R."/>
            <person name="Barker G.E."/>
            <person name="Barlow K.F."/>
            <person name="Barrett I.P."/>
            <person name="Bates K.N."/>
            <person name="Beare D.M."/>
            <person name="Beasley H."/>
            <person name="Beasley O."/>
            <person name="Beck A."/>
            <person name="Bethel G."/>
            <person name="Blechschmidt K."/>
            <person name="Brady N."/>
            <person name="Bray-Allen S."/>
            <person name="Bridgeman A.M."/>
            <person name="Brown A.J."/>
            <person name="Brown M.J."/>
            <person name="Bonnin D."/>
            <person name="Bruford E.A."/>
            <person name="Buhay C."/>
            <person name="Burch P."/>
            <person name="Burford D."/>
            <person name="Burgess J."/>
            <person name="Burrill W."/>
            <person name="Burton J."/>
            <person name="Bye J.M."/>
            <person name="Carder C."/>
            <person name="Carrel L."/>
            <person name="Chako J."/>
            <person name="Chapman J.C."/>
            <person name="Chavez D."/>
            <person name="Chen E."/>
            <person name="Chen G."/>
            <person name="Chen Y."/>
            <person name="Chen Z."/>
            <person name="Chinault C."/>
            <person name="Ciccodicola A."/>
            <person name="Clark S.Y."/>
            <person name="Clarke G."/>
            <person name="Clee C.M."/>
            <person name="Clegg S."/>
            <person name="Clerc-Blankenburg K."/>
            <person name="Clifford K."/>
            <person name="Cobley V."/>
            <person name="Cole C.G."/>
            <person name="Conquer J.S."/>
            <person name="Corby N."/>
            <person name="Connor R.E."/>
            <person name="David R."/>
            <person name="Davies J."/>
            <person name="Davis C."/>
            <person name="Davis J."/>
            <person name="Delgado O."/>
            <person name="Deshazo D."/>
            <person name="Dhami P."/>
            <person name="Ding Y."/>
            <person name="Dinh H."/>
            <person name="Dodsworth S."/>
            <person name="Draper H."/>
            <person name="Dugan-Rocha S."/>
            <person name="Dunham A."/>
            <person name="Dunn M."/>
            <person name="Durbin K.J."/>
            <person name="Dutta I."/>
            <person name="Eades T."/>
            <person name="Ellwood M."/>
            <person name="Emery-Cohen A."/>
            <person name="Errington H."/>
            <person name="Evans K.L."/>
            <person name="Faulkner L."/>
            <person name="Francis F."/>
            <person name="Frankland J."/>
            <person name="Fraser A.E."/>
            <person name="Galgoczy P."/>
            <person name="Gilbert J."/>
            <person name="Gill R."/>
            <person name="Gloeckner G."/>
            <person name="Gregory S.G."/>
            <person name="Gribble S."/>
            <person name="Griffiths C."/>
            <person name="Grocock R."/>
            <person name="Gu Y."/>
            <person name="Gwilliam R."/>
            <person name="Hamilton C."/>
            <person name="Hart E.A."/>
            <person name="Hawes A."/>
            <person name="Heath P.D."/>
            <person name="Heitmann K."/>
            <person name="Hennig S."/>
            <person name="Hernandez J."/>
            <person name="Hinzmann B."/>
            <person name="Ho S."/>
            <person name="Hoffs M."/>
            <person name="Howden P.J."/>
            <person name="Huckle E.J."/>
            <person name="Hume J."/>
            <person name="Hunt P.J."/>
            <person name="Hunt A.R."/>
            <person name="Isherwood J."/>
            <person name="Jacob L."/>
            <person name="Johnson D."/>
            <person name="Jones S."/>
            <person name="de Jong P.J."/>
            <person name="Joseph S.S."/>
            <person name="Keenan S."/>
            <person name="Kelly S."/>
            <person name="Kershaw J.K."/>
            <person name="Khan Z."/>
            <person name="Kioschis P."/>
            <person name="Klages S."/>
            <person name="Knights A.J."/>
            <person name="Kosiura A."/>
            <person name="Kovar-Smith C."/>
            <person name="Laird G.K."/>
            <person name="Langford C."/>
            <person name="Lawlor S."/>
            <person name="Leversha M."/>
            <person name="Lewis L."/>
            <person name="Liu W."/>
            <person name="Lloyd C."/>
            <person name="Lloyd D.M."/>
            <person name="Loulseged H."/>
            <person name="Loveland J.E."/>
            <person name="Lovell J.D."/>
            <person name="Lozado R."/>
            <person name="Lu J."/>
            <person name="Lyne R."/>
            <person name="Ma J."/>
            <person name="Maheshwari M."/>
            <person name="Matthews L.H."/>
            <person name="McDowall J."/>
            <person name="McLaren S."/>
            <person name="McMurray A."/>
            <person name="Meidl P."/>
            <person name="Meitinger T."/>
            <person name="Milne S."/>
            <person name="Miner G."/>
            <person name="Mistry S.L."/>
            <person name="Morgan M."/>
            <person name="Morris S."/>
            <person name="Mueller I."/>
            <person name="Mullikin J.C."/>
            <person name="Nguyen N."/>
            <person name="Nordsiek G."/>
            <person name="Nyakatura G."/>
            <person name="O'dell C.N."/>
            <person name="Okwuonu G."/>
            <person name="Palmer S."/>
            <person name="Pandian R."/>
            <person name="Parker D."/>
            <person name="Parrish J."/>
            <person name="Pasternak S."/>
            <person name="Patel D."/>
            <person name="Pearce A.V."/>
            <person name="Pearson D.M."/>
            <person name="Pelan S.E."/>
            <person name="Perez L."/>
            <person name="Porter K.M."/>
            <person name="Ramsey Y."/>
            <person name="Reichwald K."/>
            <person name="Rhodes S."/>
            <person name="Ridler K.A."/>
            <person name="Schlessinger D."/>
            <person name="Schueler M.G."/>
            <person name="Sehra H.K."/>
            <person name="Shaw-Smith C."/>
            <person name="Shen H."/>
            <person name="Sheridan E.M."/>
            <person name="Shownkeen R."/>
            <person name="Skuce C.D."/>
            <person name="Smith M.L."/>
            <person name="Sotheran E.C."/>
            <person name="Steingruber H.E."/>
            <person name="Steward C.A."/>
            <person name="Storey R."/>
            <person name="Swann R.M."/>
            <person name="Swarbreck D."/>
            <person name="Tabor P.E."/>
            <person name="Taudien S."/>
            <person name="Taylor T."/>
            <person name="Teague B."/>
            <person name="Thomas K."/>
            <person name="Thorpe A."/>
            <person name="Timms K."/>
            <person name="Tracey A."/>
            <person name="Trevanion S."/>
            <person name="Tromans A.C."/>
            <person name="d'Urso M."/>
            <person name="Verduzco D."/>
            <person name="Villasana D."/>
            <person name="Waldron L."/>
            <person name="Wall M."/>
            <person name="Wang Q."/>
            <person name="Warren J."/>
            <person name="Warry G.L."/>
            <person name="Wei X."/>
            <person name="West A."/>
            <person name="Whitehead S.L."/>
            <person name="Whiteley M.N."/>
            <person name="Wilkinson J.E."/>
            <person name="Willey D.L."/>
            <person name="Williams G."/>
            <person name="Williams L."/>
            <person name="Williamson A."/>
            <person name="Williamson H."/>
            <person name="Wilming L."/>
            <person name="Woodmansey R.L."/>
            <person name="Wray P.W."/>
            <person name="Yen J."/>
            <person name="Zhang J."/>
            <person name="Zhou J."/>
            <person name="Zoghbi H."/>
            <person name="Zorilla S."/>
            <person name="Buck D."/>
            <person name="Reinhardt R."/>
            <person name="Poustka A."/>
            <person name="Rosenthal A."/>
            <person name="Lehrach H."/>
            <person name="Meindl A."/>
            <person name="Minx P.J."/>
            <person name="Hillier L.W."/>
            <person name="Willard H.F."/>
            <person name="Wilson R.K."/>
            <person name="Waterston R.H."/>
            <person name="Rice C.M."/>
            <person name="Vaudin M."/>
            <person name="Coulson A."/>
            <person name="Nelson D.L."/>
            <person name="Weinstock G."/>
            <person name="Sulston J.E."/>
            <person name="Durbin R.M."/>
            <person name="Hubbard T."/>
            <person name="Gibbs R.A."/>
            <person name="Beck S."/>
            <person name="Rogers J."/>
            <person name="Bentley D.R."/>
        </authorList>
    </citation>
    <scope>NUCLEOTIDE SEQUENCE [LARGE SCALE GENOMIC DNA]</scope>
</reference>
<reference key="3">
    <citation type="submission" date="2005-07" db="EMBL/GenBank/DDBJ databases">
        <authorList>
            <person name="Mural R.J."/>
            <person name="Istrail S."/>
            <person name="Sutton G.G."/>
            <person name="Florea L."/>
            <person name="Halpern A.L."/>
            <person name="Mobarry C.M."/>
            <person name="Lippert R."/>
            <person name="Walenz B."/>
            <person name="Shatkay H."/>
            <person name="Dew I."/>
            <person name="Miller J.R."/>
            <person name="Flanigan M.J."/>
            <person name="Edwards N.J."/>
            <person name="Bolanos R."/>
            <person name="Fasulo D."/>
            <person name="Halldorsson B.V."/>
            <person name="Hannenhalli S."/>
            <person name="Turner R."/>
            <person name="Yooseph S."/>
            <person name="Lu F."/>
            <person name="Nusskern D.R."/>
            <person name="Shue B.C."/>
            <person name="Zheng X.H."/>
            <person name="Zhong F."/>
            <person name="Delcher A.L."/>
            <person name="Huson D.H."/>
            <person name="Kravitz S.A."/>
            <person name="Mouchard L."/>
            <person name="Reinert K."/>
            <person name="Remington K.A."/>
            <person name="Clark A.G."/>
            <person name="Waterman M.S."/>
            <person name="Eichler E.E."/>
            <person name="Adams M.D."/>
            <person name="Hunkapiller M.W."/>
            <person name="Myers E.W."/>
            <person name="Venter J.C."/>
        </authorList>
    </citation>
    <scope>NUCLEOTIDE SEQUENCE [LARGE SCALE GENOMIC DNA]</scope>
</reference>
<reference key="4">
    <citation type="journal article" date="2004" name="Genome Res.">
        <title>The status, quality, and expansion of the NIH full-length cDNA project: the Mammalian Gene Collection (MGC).</title>
        <authorList>
            <consortium name="The MGC Project Team"/>
        </authorList>
    </citation>
    <scope>NUCLEOTIDE SEQUENCE [LARGE SCALE MRNA] (ISOFORMS 1 AND 2)</scope>
    <source>
        <tissue>Testis</tissue>
    </source>
</reference>
<reference key="5">
    <citation type="journal article" date="1990" name="New Biol.">
        <title>Multiple genes encoding zinc finger domains are expressed in human T cells.</title>
        <authorList>
            <person name="Thiesen H.-J."/>
        </authorList>
    </citation>
    <scope>NUCLEOTIDE SEQUENCE [MRNA] OF 542-597 (ISOFORM 1)</scope>
    <source>
        <tissue>Lymphoid tissue</tissue>
    </source>
</reference>
<reference key="6">
    <citation type="journal article" date="2013" name="Epilepsia">
        <title>Exome sequencing reveals new causal mutations in children with epileptic encephalopathies.</title>
        <authorList>
            <person name="Veeramah K.R."/>
            <person name="Johnstone L."/>
            <person name="Karafet T.M."/>
            <person name="Wolf D."/>
            <person name="Sprissler R."/>
            <person name="Salogiannis J."/>
            <person name="Barth-Maron A."/>
            <person name="Greenberg M.E."/>
            <person name="Stuhlmann T."/>
            <person name="Weinert S."/>
            <person name="Jentsch T.J."/>
            <person name="Pazzi M."/>
            <person name="Restifo L.L."/>
            <person name="Talwar D."/>
            <person name="Erickson R.P."/>
            <person name="Hammer M.F."/>
        </authorList>
    </citation>
    <scope>VARIANT SER-62</scope>
</reference>
<feature type="chain" id="PRO_0000047345" description="Zinc finger protein 182">
    <location>
        <begin position="1"/>
        <end position="639"/>
    </location>
</feature>
<feature type="domain" description="KRAB" evidence="2">
    <location>
        <begin position="27"/>
        <end position="98"/>
    </location>
</feature>
<feature type="zinc finger region" description="C2H2-type 1; degenerate" evidence="1">
    <location>
        <begin position="206"/>
        <end position="228"/>
    </location>
</feature>
<feature type="zinc finger region" description="C2H2-type 2" evidence="1">
    <location>
        <begin position="234"/>
        <end position="256"/>
    </location>
</feature>
<feature type="zinc finger region" description="C2H2-type 3" evidence="1">
    <location>
        <begin position="262"/>
        <end position="284"/>
    </location>
</feature>
<feature type="zinc finger region" description="C2H2-type 4" evidence="1">
    <location>
        <begin position="290"/>
        <end position="312"/>
    </location>
</feature>
<feature type="zinc finger region" description="C2H2-type 5" evidence="1">
    <location>
        <begin position="318"/>
        <end position="340"/>
    </location>
</feature>
<feature type="zinc finger region" description="C2H2-type 6" evidence="1">
    <location>
        <begin position="346"/>
        <end position="368"/>
    </location>
</feature>
<feature type="zinc finger region" description="C2H2-type 7" evidence="1">
    <location>
        <begin position="374"/>
        <end position="396"/>
    </location>
</feature>
<feature type="zinc finger region" description="C2H2-type 8" evidence="1">
    <location>
        <begin position="402"/>
        <end position="424"/>
    </location>
</feature>
<feature type="zinc finger region" description="C2H2-type 9" evidence="1">
    <location>
        <begin position="430"/>
        <end position="452"/>
    </location>
</feature>
<feature type="zinc finger region" description="C2H2-type 10" evidence="1">
    <location>
        <begin position="458"/>
        <end position="480"/>
    </location>
</feature>
<feature type="zinc finger region" description="C2H2-type 11" evidence="1">
    <location>
        <begin position="486"/>
        <end position="508"/>
    </location>
</feature>
<feature type="zinc finger region" description="C2H2-type 12" evidence="1">
    <location>
        <begin position="514"/>
        <end position="536"/>
    </location>
</feature>
<feature type="zinc finger region" description="C2H2-type 13" evidence="1">
    <location>
        <begin position="542"/>
        <end position="564"/>
    </location>
</feature>
<feature type="zinc finger region" description="C2H2-type 14" evidence="1">
    <location>
        <begin position="570"/>
        <end position="592"/>
    </location>
</feature>
<feature type="zinc finger region" description="C2H2-type 15" evidence="1">
    <location>
        <begin position="598"/>
        <end position="620"/>
    </location>
</feature>
<feature type="region of interest" description="Disordered" evidence="3">
    <location>
        <begin position="619"/>
        <end position="639"/>
    </location>
</feature>
<feature type="splice variant" id="VSP_043078" description="In isoform 2." evidence="5">
    <original>MTPASASGEDSGSFYSWQKAKRE</original>
    <variation>MAKP</variation>
    <location>
        <begin position="1"/>
        <end position="23"/>
    </location>
</feature>
<feature type="sequence variant" id="VAR_077837" description="Found in a child with sporadic epilepsy; uncertain significance; dbSNP:rs146965366." evidence="4">
    <original>N</original>
    <variation>S</variation>
    <location>
        <position position="62"/>
    </location>
</feature>